<feature type="chain" id="PRO_1000067746" description="NADH-quinone oxidoreductase subunit H">
    <location>
        <begin position="1"/>
        <end position="357"/>
    </location>
</feature>
<feature type="transmembrane region" description="Helical" evidence="1">
    <location>
        <begin position="26"/>
        <end position="46"/>
    </location>
</feature>
<feature type="transmembrane region" description="Helical" evidence="1">
    <location>
        <begin position="92"/>
        <end position="112"/>
    </location>
</feature>
<feature type="transmembrane region" description="Helical" evidence="1">
    <location>
        <begin position="127"/>
        <end position="147"/>
    </location>
</feature>
<feature type="transmembrane region" description="Helical" evidence="1">
    <location>
        <begin position="164"/>
        <end position="184"/>
    </location>
</feature>
<feature type="transmembrane region" description="Helical" evidence="1">
    <location>
        <begin position="203"/>
        <end position="223"/>
    </location>
</feature>
<feature type="transmembrane region" description="Helical" evidence="1">
    <location>
        <begin position="259"/>
        <end position="279"/>
    </location>
</feature>
<feature type="transmembrane region" description="Helical" evidence="1">
    <location>
        <begin position="294"/>
        <end position="314"/>
    </location>
</feature>
<feature type="transmembrane region" description="Helical" evidence="1">
    <location>
        <begin position="329"/>
        <end position="349"/>
    </location>
</feature>
<comment type="function">
    <text evidence="1">NDH-1 shuttles electrons from NADH, via FMN and iron-sulfur (Fe-S) centers, to quinones in the respiratory chain. The immediate electron acceptor for the enzyme in this species is believed to be ubiquinone. Couples the redox reaction to proton translocation (for every two electrons transferred, four hydrogen ions are translocated across the cytoplasmic membrane), and thus conserves the redox energy in a proton gradient. This subunit may bind ubiquinone.</text>
</comment>
<comment type="catalytic activity">
    <reaction evidence="1">
        <text>a quinone + NADH + 5 H(+)(in) = a quinol + NAD(+) + 4 H(+)(out)</text>
        <dbReference type="Rhea" id="RHEA:57888"/>
        <dbReference type="ChEBI" id="CHEBI:15378"/>
        <dbReference type="ChEBI" id="CHEBI:24646"/>
        <dbReference type="ChEBI" id="CHEBI:57540"/>
        <dbReference type="ChEBI" id="CHEBI:57945"/>
        <dbReference type="ChEBI" id="CHEBI:132124"/>
    </reaction>
</comment>
<comment type="subunit">
    <text evidence="1">NDH-1 is composed of 14 different subunits. Subunits NuoA, H, J, K, L, M, N constitute the membrane sector of the complex.</text>
</comment>
<comment type="subcellular location">
    <subcellularLocation>
        <location evidence="1">Cell inner membrane</location>
        <topology evidence="1">Multi-pass membrane protein</topology>
    </subcellularLocation>
</comment>
<comment type="similarity">
    <text evidence="1">Belongs to the complex I subunit 1 family.</text>
</comment>
<keyword id="KW-0997">Cell inner membrane</keyword>
<keyword id="KW-1003">Cell membrane</keyword>
<keyword id="KW-0472">Membrane</keyword>
<keyword id="KW-0520">NAD</keyword>
<keyword id="KW-0874">Quinone</keyword>
<keyword id="KW-1278">Translocase</keyword>
<keyword id="KW-0812">Transmembrane</keyword>
<keyword id="KW-1133">Transmembrane helix</keyword>
<keyword id="KW-0830">Ubiquinone</keyword>
<organism>
    <name type="scientific">Janthinobacterium sp. (strain Marseille)</name>
    <name type="common">Minibacterium massiliensis</name>
    <dbReference type="NCBI Taxonomy" id="375286"/>
    <lineage>
        <taxon>Bacteria</taxon>
        <taxon>Pseudomonadati</taxon>
        <taxon>Pseudomonadota</taxon>
        <taxon>Betaproteobacteria</taxon>
        <taxon>Burkholderiales</taxon>
        <taxon>Oxalobacteraceae</taxon>
        <taxon>Janthinobacterium</taxon>
    </lineage>
</organism>
<gene>
    <name evidence="1" type="primary">nuoH</name>
    <name type="ordered locus">mma_1469</name>
</gene>
<evidence type="ECO:0000255" key="1">
    <source>
        <dbReference type="HAMAP-Rule" id="MF_01350"/>
    </source>
</evidence>
<name>NUOH_JANMA</name>
<dbReference type="EC" id="7.1.1.-" evidence="1"/>
<dbReference type="EMBL" id="CP000269">
    <property type="protein sequence ID" value="ABR88738.1"/>
    <property type="molecule type" value="Genomic_DNA"/>
</dbReference>
<dbReference type="RefSeq" id="WP_012079325.1">
    <property type="nucleotide sequence ID" value="NC_009659.1"/>
</dbReference>
<dbReference type="SMR" id="A6SY12"/>
<dbReference type="STRING" id="375286.mma_1469"/>
<dbReference type="KEGG" id="mms:mma_1469"/>
<dbReference type="eggNOG" id="COG1005">
    <property type="taxonomic scope" value="Bacteria"/>
</dbReference>
<dbReference type="HOGENOM" id="CLU_015134_0_1_4"/>
<dbReference type="OrthoDB" id="9803734at2"/>
<dbReference type="Proteomes" id="UP000006388">
    <property type="component" value="Chromosome"/>
</dbReference>
<dbReference type="GO" id="GO:0005886">
    <property type="term" value="C:plasma membrane"/>
    <property type="evidence" value="ECO:0007669"/>
    <property type="project" value="UniProtKB-SubCell"/>
</dbReference>
<dbReference type="GO" id="GO:0003954">
    <property type="term" value="F:NADH dehydrogenase activity"/>
    <property type="evidence" value="ECO:0007669"/>
    <property type="project" value="TreeGrafter"/>
</dbReference>
<dbReference type="GO" id="GO:0016655">
    <property type="term" value="F:oxidoreductase activity, acting on NAD(P)H, quinone or similar compound as acceptor"/>
    <property type="evidence" value="ECO:0007669"/>
    <property type="project" value="UniProtKB-UniRule"/>
</dbReference>
<dbReference type="GO" id="GO:0048038">
    <property type="term" value="F:quinone binding"/>
    <property type="evidence" value="ECO:0007669"/>
    <property type="project" value="UniProtKB-KW"/>
</dbReference>
<dbReference type="GO" id="GO:0009060">
    <property type="term" value="P:aerobic respiration"/>
    <property type="evidence" value="ECO:0007669"/>
    <property type="project" value="TreeGrafter"/>
</dbReference>
<dbReference type="HAMAP" id="MF_01350">
    <property type="entry name" value="NDH1_NuoH"/>
    <property type="match status" value="1"/>
</dbReference>
<dbReference type="InterPro" id="IPR001694">
    <property type="entry name" value="NADH_UbQ_OxRdtase_su1/FPO"/>
</dbReference>
<dbReference type="InterPro" id="IPR018086">
    <property type="entry name" value="NADH_UbQ_OxRdtase_su1_CS"/>
</dbReference>
<dbReference type="NCBIfam" id="NF004741">
    <property type="entry name" value="PRK06076.1-2"/>
    <property type="match status" value="1"/>
</dbReference>
<dbReference type="NCBIfam" id="NF004742">
    <property type="entry name" value="PRK06076.1-3"/>
    <property type="match status" value="1"/>
</dbReference>
<dbReference type="PANTHER" id="PTHR11432">
    <property type="entry name" value="NADH DEHYDROGENASE SUBUNIT 1"/>
    <property type="match status" value="1"/>
</dbReference>
<dbReference type="PANTHER" id="PTHR11432:SF3">
    <property type="entry name" value="NADH-UBIQUINONE OXIDOREDUCTASE CHAIN 1"/>
    <property type="match status" value="1"/>
</dbReference>
<dbReference type="Pfam" id="PF00146">
    <property type="entry name" value="NADHdh"/>
    <property type="match status" value="1"/>
</dbReference>
<dbReference type="PROSITE" id="PS00667">
    <property type="entry name" value="COMPLEX1_ND1_1"/>
    <property type="match status" value="1"/>
</dbReference>
<dbReference type="PROSITE" id="PS00668">
    <property type="entry name" value="COMPLEX1_ND1_2"/>
    <property type="match status" value="1"/>
</dbReference>
<reference key="1">
    <citation type="journal article" date="2007" name="PLoS Genet.">
        <title>Genome analysis of Minibacterium massiliensis highlights the convergent evolution of water-living bacteria.</title>
        <authorList>
            <person name="Audic S."/>
            <person name="Robert C."/>
            <person name="Campagna B."/>
            <person name="Parinello H."/>
            <person name="Claverie J.-M."/>
            <person name="Raoult D."/>
            <person name="Drancourt M."/>
        </authorList>
    </citation>
    <scope>NUCLEOTIDE SEQUENCE [LARGE SCALE GENOMIC DNA]</scope>
    <source>
        <strain>Marseille</strain>
    </source>
</reference>
<sequence length="357" mass="40053">MDQLFASIHATGQSLLGYYWPLVWNLVKIIAVVAPLMGAVAYLTLWERKVIGWMHVRHGPNRTGPAGLLQPIADGVKLLLKEIVVPAKSSKALFVIAPIMTIMPALAAWAVIPFGPETVLADVNAGLLFVMAITSLEVYGVIVAGWASNSKYAFLGAMRASAQMISYEIAMGFVLVIILMVTGSMNLTTIVNTQNTGRFAEMGLTFLSWNWLPLLPMFFIYIISGTAELNRHPFDVVEGESEIVAGHMVEYSGMSFAMFFLAEYANMWLISIMATLMFLGGWTSPIDMAPFTWVPGWIWLGLKTLMVVTMFIWFRASFPRYRYDQIMRLGWKVFIPLTLVYLLIVAIWMKTPWNIWN</sequence>
<accession>A6SY12</accession>
<protein>
    <recommendedName>
        <fullName evidence="1">NADH-quinone oxidoreductase subunit H</fullName>
        <ecNumber evidence="1">7.1.1.-</ecNumber>
    </recommendedName>
    <alternativeName>
        <fullName evidence="1">NADH dehydrogenase I subunit H</fullName>
    </alternativeName>
    <alternativeName>
        <fullName evidence="1">NDH-1 subunit H</fullName>
    </alternativeName>
</protein>
<proteinExistence type="inferred from homology"/>